<keyword id="KW-0030">Aminoacyl-tRNA synthetase</keyword>
<keyword id="KW-0067">ATP-binding</keyword>
<keyword id="KW-0963">Cytoplasm</keyword>
<keyword id="KW-0436">Ligase</keyword>
<keyword id="KW-0479">Metal-binding</keyword>
<keyword id="KW-0547">Nucleotide-binding</keyword>
<keyword id="KW-0648">Protein biosynthesis</keyword>
<keyword id="KW-1185">Reference proteome</keyword>
<keyword id="KW-0694">RNA-binding</keyword>
<keyword id="KW-0820">tRNA-binding</keyword>
<keyword id="KW-0862">Zinc</keyword>
<evidence type="ECO:0000255" key="1">
    <source>
        <dbReference type="HAMAP-Rule" id="MF_00036"/>
    </source>
</evidence>
<proteinExistence type="inferred from homology"/>
<accession>Q2SBT9</accession>
<feature type="chain" id="PRO_0000347629" description="Alanine--tRNA ligase">
    <location>
        <begin position="1"/>
        <end position="876"/>
    </location>
</feature>
<feature type="binding site" evidence="1">
    <location>
        <position position="562"/>
    </location>
    <ligand>
        <name>Zn(2+)</name>
        <dbReference type="ChEBI" id="CHEBI:29105"/>
    </ligand>
</feature>
<feature type="binding site" evidence="1">
    <location>
        <position position="566"/>
    </location>
    <ligand>
        <name>Zn(2+)</name>
        <dbReference type="ChEBI" id="CHEBI:29105"/>
    </ligand>
</feature>
<feature type="binding site" evidence="1">
    <location>
        <position position="666"/>
    </location>
    <ligand>
        <name>Zn(2+)</name>
        <dbReference type="ChEBI" id="CHEBI:29105"/>
    </ligand>
</feature>
<feature type="binding site" evidence="1">
    <location>
        <position position="670"/>
    </location>
    <ligand>
        <name>Zn(2+)</name>
        <dbReference type="ChEBI" id="CHEBI:29105"/>
    </ligand>
</feature>
<gene>
    <name evidence="1" type="primary">alaS</name>
    <name type="ordered locus">HCH_05209</name>
</gene>
<comment type="function">
    <text evidence="1">Catalyzes the attachment of alanine to tRNA(Ala) in a two-step reaction: alanine is first activated by ATP to form Ala-AMP and then transferred to the acceptor end of tRNA(Ala). Also edits incorrectly charged Ser-tRNA(Ala) and Gly-tRNA(Ala) via its editing domain.</text>
</comment>
<comment type="catalytic activity">
    <reaction evidence="1">
        <text>tRNA(Ala) + L-alanine + ATP = L-alanyl-tRNA(Ala) + AMP + diphosphate</text>
        <dbReference type="Rhea" id="RHEA:12540"/>
        <dbReference type="Rhea" id="RHEA-COMP:9657"/>
        <dbReference type="Rhea" id="RHEA-COMP:9923"/>
        <dbReference type="ChEBI" id="CHEBI:30616"/>
        <dbReference type="ChEBI" id="CHEBI:33019"/>
        <dbReference type="ChEBI" id="CHEBI:57972"/>
        <dbReference type="ChEBI" id="CHEBI:78442"/>
        <dbReference type="ChEBI" id="CHEBI:78497"/>
        <dbReference type="ChEBI" id="CHEBI:456215"/>
        <dbReference type="EC" id="6.1.1.7"/>
    </reaction>
</comment>
<comment type="cofactor">
    <cofactor evidence="1">
        <name>Zn(2+)</name>
        <dbReference type="ChEBI" id="CHEBI:29105"/>
    </cofactor>
    <text evidence="1">Binds 1 zinc ion per subunit.</text>
</comment>
<comment type="subcellular location">
    <subcellularLocation>
        <location evidence="1">Cytoplasm</location>
    </subcellularLocation>
</comment>
<comment type="domain">
    <text evidence="1">Consists of three domains; the N-terminal catalytic domain, the editing domain and the C-terminal C-Ala domain. The editing domain removes incorrectly charged amino acids, while the C-Ala domain, along with tRNA(Ala), serves as a bridge to cooperatively bring together the editing and aminoacylation centers thus stimulating deacylation of misacylated tRNAs.</text>
</comment>
<comment type="similarity">
    <text evidence="1">Belongs to the class-II aminoacyl-tRNA synthetase family.</text>
</comment>
<name>SYA_HAHCH</name>
<organism>
    <name type="scientific">Hahella chejuensis (strain KCTC 2396)</name>
    <dbReference type="NCBI Taxonomy" id="349521"/>
    <lineage>
        <taxon>Bacteria</taxon>
        <taxon>Pseudomonadati</taxon>
        <taxon>Pseudomonadota</taxon>
        <taxon>Gammaproteobacteria</taxon>
        <taxon>Oceanospirillales</taxon>
        <taxon>Hahellaceae</taxon>
        <taxon>Hahella</taxon>
    </lineage>
</organism>
<protein>
    <recommendedName>
        <fullName evidence="1">Alanine--tRNA ligase</fullName>
        <ecNumber evidence="1">6.1.1.7</ecNumber>
    </recommendedName>
    <alternativeName>
        <fullName evidence="1">Alanyl-tRNA synthetase</fullName>
        <shortName evidence="1">AlaRS</shortName>
    </alternativeName>
</protein>
<sequence>MKSSEIRSAFLKYFQRNGHEVVASSSLVPADDPTLLFTNAGMNQFKDVFLGKDKRNYDRATTSQKCVRAGGKHNDLENVGYTARHHTFFEMLGNFSFGDYFKREAINYAWEFLTSSDWLNIDKSKLTVTVYASDDESFDIWANEIGVPEERIIRIGDNKGAPYASDNFWQMGDTGPCGPCTEIFYDHGPHIAGGPPGSPDEDGDRFIEIWNVVFMQFNRTADGEMHPLPKPSVDTGMGLERISALMQGVHSNYEIDLFQELLAEASKVLGGASIEEPALRVIADHIRSSSFLIADGVLPENIGRGSVLRRIIRRAARYGNKVGATEPFLHKLVGKLVELMGDAYPELKASQNKIEKTLLLEEEQFAKTLDKGLKLLEHELEQLKGMTIPGKTIFTLYDTYGFPVELTNDIARERSLAMDMDGYEVEMEAQRKRAREAGSFGVDYNAGLNIDVSSEFTGYTELAGSYKALALFAGSDKADALTVGQQGLVVLDKTPFYAESGGQVGDTGVLKTDTGVFVVKDTKKEGAAIVHIGAVSEGEIKVGQTVTAEVDRHKRKATALNHSATHLLHAALRKVLGDHVAQKGSLVDPERLRFDFAHFEPMTQEQIRQVESIVNAQIRANTSVSTEVMGMDAARERGAMALFGEKYGDTVRVLAMGESDFSIELCGGTHVERTGDIGMFVIASEAGTAAGVRRIEALTGQPAENWVQSSDALLRDIAVLVKGNRETAADKVRALIERSRQLEKEVDQVKAKLASSAGSDLAASAVDVKGLKVLAAKLDGVDRKALMDTVDQLKNKLGQAVVLLASVEDGKASIVAGVTKAESAKVKAGDLVKMVAEQLGGKGGGRPDMAQGGGVELGKLDAALASVNAWVEGQLG</sequence>
<dbReference type="EC" id="6.1.1.7" evidence="1"/>
<dbReference type="EMBL" id="CP000155">
    <property type="protein sequence ID" value="ABC31885.1"/>
    <property type="molecule type" value="Genomic_DNA"/>
</dbReference>
<dbReference type="RefSeq" id="WP_011398949.1">
    <property type="nucleotide sequence ID" value="NC_007645.1"/>
</dbReference>
<dbReference type="SMR" id="Q2SBT9"/>
<dbReference type="STRING" id="349521.HCH_05209"/>
<dbReference type="KEGG" id="hch:HCH_05209"/>
<dbReference type="eggNOG" id="COG0013">
    <property type="taxonomic scope" value="Bacteria"/>
</dbReference>
<dbReference type="HOGENOM" id="CLU_004485_1_1_6"/>
<dbReference type="OrthoDB" id="9803884at2"/>
<dbReference type="Proteomes" id="UP000000238">
    <property type="component" value="Chromosome"/>
</dbReference>
<dbReference type="GO" id="GO:0005829">
    <property type="term" value="C:cytosol"/>
    <property type="evidence" value="ECO:0007669"/>
    <property type="project" value="TreeGrafter"/>
</dbReference>
<dbReference type="GO" id="GO:0004813">
    <property type="term" value="F:alanine-tRNA ligase activity"/>
    <property type="evidence" value="ECO:0007669"/>
    <property type="project" value="UniProtKB-UniRule"/>
</dbReference>
<dbReference type="GO" id="GO:0002161">
    <property type="term" value="F:aminoacyl-tRNA deacylase activity"/>
    <property type="evidence" value="ECO:0007669"/>
    <property type="project" value="TreeGrafter"/>
</dbReference>
<dbReference type="GO" id="GO:0005524">
    <property type="term" value="F:ATP binding"/>
    <property type="evidence" value="ECO:0007669"/>
    <property type="project" value="UniProtKB-UniRule"/>
</dbReference>
<dbReference type="GO" id="GO:0000049">
    <property type="term" value="F:tRNA binding"/>
    <property type="evidence" value="ECO:0007669"/>
    <property type="project" value="UniProtKB-KW"/>
</dbReference>
<dbReference type="GO" id="GO:0008270">
    <property type="term" value="F:zinc ion binding"/>
    <property type="evidence" value="ECO:0007669"/>
    <property type="project" value="UniProtKB-UniRule"/>
</dbReference>
<dbReference type="GO" id="GO:0006419">
    <property type="term" value="P:alanyl-tRNA aminoacylation"/>
    <property type="evidence" value="ECO:0007669"/>
    <property type="project" value="UniProtKB-UniRule"/>
</dbReference>
<dbReference type="GO" id="GO:0045892">
    <property type="term" value="P:negative regulation of DNA-templated transcription"/>
    <property type="evidence" value="ECO:0007669"/>
    <property type="project" value="TreeGrafter"/>
</dbReference>
<dbReference type="CDD" id="cd00673">
    <property type="entry name" value="AlaRS_core"/>
    <property type="match status" value="1"/>
</dbReference>
<dbReference type="FunFam" id="2.40.30.130:FF:000001">
    <property type="entry name" value="Alanine--tRNA ligase"/>
    <property type="match status" value="1"/>
</dbReference>
<dbReference type="FunFam" id="3.10.310.40:FF:000001">
    <property type="entry name" value="Alanine--tRNA ligase"/>
    <property type="match status" value="1"/>
</dbReference>
<dbReference type="FunFam" id="3.30.54.20:FF:000001">
    <property type="entry name" value="Alanine--tRNA ligase"/>
    <property type="match status" value="1"/>
</dbReference>
<dbReference type="FunFam" id="3.30.930.10:FF:000004">
    <property type="entry name" value="Alanine--tRNA ligase"/>
    <property type="match status" value="1"/>
</dbReference>
<dbReference type="FunFam" id="3.30.980.10:FF:000004">
    <property type="entry name" value="Alanine--tRNA ligase, cytoplasmic"/>
    <property type="match status" value="1"/>
</dbReference>
<dbReference type="Gene3D" id="2.40.30.130">
    <property type="match status" value="1"/>
</dbReference>
<dbReference type="Gene3D" id="3.10.310.40">
    <property type="match status" value="1"/>
</dbReference>
<dbReference type="Gene3D" id="3.30.54.20">
    <property type="match status" value="1"/>
</dbReference>
<dbReference type="Gene3D" id="6.10.250.550">
    <property type="match status" value="1"/>
</dbReference>
<dbReference type="Gene3D" id="3.30.930.10">
    <property type="entry name" value="Bira Bifunctional Protein, Domain 2"/>
    <property type="match status" value="1"/>
</dbReference>
<dbReference type="Gene3D" id="3.30.980.10">
    <property type="entry name" value="Threonyl-trna Synthetase, Chain A, domain 2"/>
    <property type="match status" value="1"/>
</dbReference>
<dbReference type="HAMAP" id="MF_00036_B">
    <property type="entry name" value="Ala_tRNA_synth_B"/>
    <property type="match status" value="1"/>
</dbReference>
<dbReference type="InterPro" id="IPR045864">
    <property type="entry name" value="aa-tRNA-synth_II/BPL/LPL"/>
</dbReference>
<dbReference type="InterPro" id="IPR002318">
    <property type="entry name" value="Ala-tRNA-lgiase_IIc"/>
</dbReference>
<dbReference type="InterPro" id="IPR018162">
    <property type="entry name" value="Ala-tRNA-ligase_IIc_anticod-bd"/>
</dbReference>
<dbReference type="InterPro" id="IPR018165">
    <property type="entry name" value="Ala-tRNA-synth_IIc_core"/>
</dbReference>
<dbReference type="InterPro" id="IPR018164">
    <property type="entry name" value="Ala-tRNA-synth_IIc_N"/>
</dbReference>
<dbReference type="InterPro" id="IPR050058">
    <property type="entry name" value="Ala-tRNA_ligase"/>
</dbReference>
<dbReference type="InterPro" id="IPR023033">
    <property type="entry name" value="Ala_tRNA_ligase_euk/bac"/>
</dbReference>
<dbReference type="InterPro" id="IPR003156">
    <property type="entry name" value="DHHA1_dom"/>
</dbReference>
<dbReference type="InterPro" id="IPR018163">
    <property type="entry name" value="Thr/Ala-tRNA-synth_IIc_edit"/>
</dbReference>
<dbReference type="InterPro" id="IPR009000">
    <property type="entry name" value="Transl_B-barrel_sf"/>
</dbReference>
<dbReference type="InterPro" id="IPR012947">
    <property type="entry name" value="tRNA_SAD"/>
</dbReference>
<dbReference type="NCBIfam" id="TIGR00344">
    <property type="entry name" value="alaS"/>
    <property type="match status" value="1"/>
</dbReference>
<dbReference type="PANTHER" id="PTHR11777:SF9">
    <property type="entry name" value="ALANINE--TRNA LIGASE, CYTOPLASMIC"/>
    <property type="match status" value="1"/>
</dbReference>
<dbReference type="PANTHER" id="PTHR11777">
    <property type="entry name" value="ALANYL-TRNA SYNTHETASE"/>
    <property type="match status" value="1"/>
</dbReference>
<dbReference type="Pfam" id="PF02272">
    <property type="entry name" value="DHHA1"/>
    <property type="match status" value="1"/>
</dbReference>
<dbReference type="Pfam" id="PF01411">
    <property type="entry name" value="tRNA-synt_2c"/>
    <property type="match status" value="1"/>
</dbReference>
<dbReference type="Pfam" id="PF07973">
    <property type="entry name" value="tRNA_SAD"/>
    <property type="match status" value="1"/>
</dbReference>
<dbReference type="PRINTS" id="PR00980">
    <property type="entry name" value="TRNASYNTHALA"/>
</dbReference>
<dbReference type="SMART" id="SM00863">
    <property type="entry name" value="tRNA_SAD"/>
    <property type="match status" value="1"/>
</dbReference>
<dbReference type="SUPFAM" id="SSF55681">
    <property type="entry name" value="Class II aaRS and biotin synthetases"/>
    <property type="match status" value="1"/>
</dbReference>
<dbReference type="SUPFAM" id="SSF101353">
    <property type="entry name" value="Putative anticodon-binding domain of alanyl-tRNA synthetase (AlaRS)"/>
    <property type="match status" value="1"/>
</dbReference>
<dbReference type="SUPFAM" id="SSF55186">
    <property type="entry name" value="ThrRS/AlaRS common domain"/>
    <property type="match status" value="1"/>
</dbReference>
<dbReference type="SUPFAM" id="SSF50447">
    <property type="entry name" value="Translation proteins"/>
    <property type="match status" value="1"/>
</dbReference>
<dbReference type="PROSITE" id="PS50860">
    <property type="entry name" value="AA_TRNA_LIGASE_II_ALA"/>
    <property type="match status" value="1"/>
</dbReference>
<reference key="1">
    <citation type="journal article" date="2005" name="Nucleic Acids Res.">
        <title>Genomic blueprint of Hahella chejuensis, a marine microbe producing an algicidal agent.</title>
        <authorList>
            <person name="Jeong H."/>
            <person name="Yim J.H."/>
            <person name="Lee C."/>
            <person name="Choi S.-H."/>
            <person name="Park Y.K."/>
            <person name="Yoon S.H."/>
            <person name="Hur C.-G."/>
            <person name="Kang H.-Y."/>
            <person name="Kim D."/>
            <person name="Lee H.H."/>
            <person name="Park K.H."/>
            <person name="Park S.-H."/>
            <person name="Park H.-S."/>
            <person name="Lee H.K."/>
            <person name="Oh T.K."/>
            <person name="Kim J.F."/>
        </authorList>
    </citation>
    <scope>NUCLEOTIDE SEQUENCE [LARGE SCALE GENOMIC DNA]</scope>
    <source>
        <strain>KCTC 2396</strain>
    </source>
</reference>